<accession>Q9CR64</accession>
<accession>Q8R3W3</accession>
<accession>Q9CZU1</accession>
<organism>
    <name type="scientific">Mus musculus</name>
    <name type="common">Mouse</name>
    <dbReference type="NCBI Taxonomy" id="10090"/>
    <lineage>
        <taxon>Eukaryota</taxon>
        <taxon>Metazoa</taxon>
        <taxon>Chordata</taxon>
        <taxon>Craniata</taxon>
        <taxon>Vertebrata</taxon>
        <taxon>Euteleostomi</taxon>
        <taxon>Mammalia</taxon>
        <taxon>Eutheria</taxon>
        <taxon>Euarchontoglires</taxon>
        <taxon>Glires</taxon>
        <taxon>Rodentia</taxon>
        <taxon>Myomorpha</taxon>
        <taxon>Muroidea</taxon>
        <taxon>Muridae</taxon>
        <taxon>Murinae</taxon>
        <taxon>Mus</taxon>
        <taxon>Mus</taxon>
    </lineage>
</organism>
<sequence>MSAIFNFQSLLTVILLLICTCAYIRSLAPSILDRNKTGLLGIFWKCARIGERKSPYVAICCIVMAFSILFIQ</sequence>
<dbReference type="EMBL" id="AK002884">
    <property type="protein sequence ID" value="BAB22431.1"/>
    <property type="molecule type" value="mRNA"/>
</dbReference>
<dbReference type="EMBL" id="AK007771">
    <property type="protein sequence ID" value="BAB25245.1"/>
    <property type="molecule type" value="mRNA"/>
</dbReference>
<dbReference type="EMBL" id="AK007966">
    <property type="protein sequence ID" value="BAB25377.1"/>
    <property type="molecule type" value="mRNA"/>
</dbReference>
<dbReference type="EMBL" id="AK012161">
    <property type="protein sequence ID" value="BAB28068.1"/>
    <property type="molecule type" value="mRNA"/>
</dbReference>
<dbReference type="EMBL" id="AK016036">
    <property type="protein sequence ID" value="BAB30088.1"/>
    <property type="molecule type" value="mRNA"/>
</dbReference>
<dbReference type="EMBL" id="AK016737">
    <property type="protein sequence ID" value="BAB30403.1"/>
    <property type="molecule type" value="mRNA"/>
</dbReference>
<dbReference type="EMBL" id="AK021263">
    <property type="protein sequence ID" value="BAB32353.1"/>
    <property type="molecule type" value="mRNA"/>
</dbReference>
<dbReference type="EMBL" id="AK031706">
    <property type="protein sequence ID" value="BAC27524.1"/>
    <property type="molecule type" value="mRNA"/>
</dbReference>
<dbReference type="EMBL" id="AK032474">
    <property type="protein sequence ID" value="BAC27890.1"/>
    <property type="molecule type" value="mRNA"/>
</dbReference>
<dbReference type="EMBL" id="AK088895">
    <property type="protein sequence ID" value="BAC40638.1"/>
    <property type="molecule type" value="mRNA"/>
</dbReference>
<dbReference type="EMBL" id="AK132361">
    <property type="protein sequence ID" value="BAE21124.1"/>
    <property type="molecule type" value="mRNA"/>
</dbReference>
<dbReference type="EMBL" id="AK160704">
    <property type="protein sequence ID" value="BAE35963.1"/>
    <property type="molecule type" value="mRNA"/>
</dbReference>
<dbReference type="EMBL" id="AK161037">
    <property type="protein sequence ID" value="BAE36161.1"/>
    <property type="molecule type" value="mRNA"/>
</dbReference>
<dbReference type="EMBL" id="BC024352">
    <property type="protein sequence ID" value="AAH24352.1"/>
    <property type="molecule type" value="mRNA"/>
</dbReference>
<dbReference type="CCDS" id="CCDS36741.1">
    <molecule id="Q9CR64-1"/>
</dbReference>
<dbReference type="RefSeq" id="NP_079611.2">
    <molecule id="Q9CR64-1"/>
    <property type="nucleotide sequence ID" value="NM_025335.3"/>
</dbReference>
<dbReference type="FunCoup" id="Q9CR64">
    <property type="interactions" value="2045"/>
</dbReference>
<dbReference type="IntAct" id="Q9CR64">
    <property type="interactions" value="1"/>
</dbReference>
<dbReference type="MINT" id="Q9CR64"/>
<dbReference type="STRING" id="10090.ENSMUSP00000125314"/>
<dbReference type="GlyCosmos" id="Q9CR64">
    <property type="glycosylation" value="1 site, No reported glycans"/>
</dbReference>
<dbReference type="GlyGen" id="Q9CR64">
    <property type="glycosylation" value="1 site"/>
</dbReference>
<dbReference type="iPTMnet" id="Q9CR64"/>
<dbReference type="PhosphoSitePlus" id="Q9CR64"/>
<dbReference type="SwissPalm" id="Q9CR64"/>
<dbReference type="jPOST" id="Q9CR64"/>
<dbReference type="PaxDb" id="10090-ENSMUSP00000125314"/>
<dbReference type="ProteomicsDB" id="264757">
    <molecule id="Q9CR64-1"/>
</dbReference>
<dbReference type="ProteomicsDB" id="264758">
    <molecule id="Q9CR64-2"/>
</dbReference>
<dbReference type="Pumba" id="Q9CR64"/>
<dbReference type="Antibodypedia" id="82307">
    <property type="antibodies" value="1 antibodies from 1 providers"/>
</dbReference>
<dbReference type="DNASU" id="66074"/>
<dbReference type="Ensembl" id="ENSMUST00000012566.9">
    <molecule id="Q9CR64-2"/>
    <property type="protein sequence ID" value="ENSMUSP00000012566.9"/>
    <property type="gene ID" value="ENSMUSG00000012422.15"/>
</dbReference>
<dbReference type="Ensembl" id="ENSMUST00000161568.8">
    <molecule id="Q9CR64-1"/>
    <property type="protein sequence ID" value="ENSMUSP00000125314.2"/>
    <property type="gene ID" value="ENSMUSG00000012422.15"/>
</dbReference>
<dbReference type="GeneID" id="66074"/>
<dbReference type="KEGG" id="mmu:66074"/>
<dbReference type="UCSC" id="uc007rjo.2">
    <molecule id="Q9CR64-1"/>
    <property type="organism name" value="mouse"/>
</dbReference>
<dbReference type="AGR" id="MGI:1913324"/>
<dbReference type="CTD" id="66074"/>
<dbReference type="MGI" id="MGI:1913324">
    <property type="gene designation" value="Tmem167"/>
</dbReference>
<dbReference type="VEuPathDB" id="HostDB:ENSMUSG00000012422"/>
<dbReference type="eggNOG" id="KOG3808">
    <property type="taxonomic scope" value="Eukaryota"/>
</dbReference>
<dbReference type="GeneTree" id="ENSGT00940000155186"/>
<dbReference type="HOGENOM" id="CLU_152663_1_1_1"/>
<dbReference type="InParanoid" id="Q9CR64"/>
<dbReference type="OMA" id="KVGFQGT"/>
<dbReference type="OrthoDB" id="10034655at2759"/>
<dbReference type="PhylomeDB" id="Q9CR64"/>
<dbReference type="TreeFam" id="TF300138"/>
<dbReference type="BioGRID-ORCS" id="66074">
    <property type="hits" value="10 hits in 72 CRISPR screens"/>
</dbReference>
<dbReference type="ChiTaRS" id="Tmem167">
    <property type="organism name" value="mouse"/>
</dbReference>
<dbReference type="PRO" id="PR:Q9CR64"/>
<dbReference type="Proteomes" id="UP000000589">
    <property type="component" value="Chromosome 13"/>
</dbReference>
<dbReference type="RNAct" id="Q9CR64">
    <property type="molecule type" value="protein"/>
</dbReference>
<dbReference type="Bgee" id="ENSMUSG00000012422">
    <property type="expression patterns" value="Expressed in humerus cartilage element and 248 other cell types or tissues"/>
</dbReference>
<dbReference type="ExpressionAtlas" id="Q9CR64">
    <property type="expression patterns" value="baseline and differential"/>
</dbReference>
<dbReference type="GO" id="GO:0000139">
    <property type="term" value="C:Golgi membrane"/>
    <property type="evidence" value="ECO:0007669"/>
    <property type="project" value="UniProtKB-SubCell"/>
</dbReference>
<dbReference type="GO" id="GO:0045054">
    <property type="term" value="P:constitutive secretory pathway"/>
    <property type="evidence" value="ECO:0007669"/>
    <property type="project" value="Ensembl"/>
</dbReference>
<dbReference type="InterPro" id="IPR051523">
    <property type="entry name" value="KISH_domain"/>
</dbReference>
<dbReference type="InterPro" id="IPR009653">
    <property type="entry name" value="Ksh1"/>
</dbReference>
<dbReference type="PANTHER" id="PTHR13229">
    <property type="entry name" value="PROTEIN KISH-A"/>
    <property type="match status" value="1"/>
</dbReference>
<dbReference type="Pfam" id="PF06842">
    <property type="entry name" value="DUF1242"/>
    <property type="match status" value="1"/>
</dbReference>
<keyword id="KW-0025">Alternative splicing</keyword>
<keyword id="KW-0325">Glycoprotein</keyword>
<keyword id="KW-0333">Golgi apparatus</keyword>
<keyword id="KW-0472">Membrane</keyword>
<keyword id="KW-1185">Reference proteome</keyword>
<keyword id="KW-0732">Signal</keyword>
<keyword id="KW-0812">Transmembrane</keyword>
<keyword id="KW-1133">Transmembrane helix</keyword>
<feature type="signal peptide" evidence="2">
    <location>
        <begin position="1"/>
        <end position="26"/>
    </location>
</feature>
<feature type="chain" id="PRO_0000247769" description="Protein kish-A">
    <location>
        <begin position="27"/>
        <end position="72"/>
    </location>
</feature>
<feature type="topological domain" description="Extracellular" evidence="2">
    <location>
        <begin position="27"/>
        <end position="53"/>
    </location>
</feature>
<feature type="transmembrane region" description="Helical" evidence="2">
    <location>
        <begin position="54"/>
        <end position="71"/>
    </location>
</feature>
<feature type="topological domain" description="Cytoplasmic" evidence="2">
    <location>
        <position position="72"/>
    </location>
</feature>
<feature type="glycosylation site" description="N-linked (GlcNAc...) asparagine" evidence="2">
    <location>
        <position position="35"/>
    </location>
</feature>
<feature type="splice variant" id="VSP_020044" description="In isoform 2." evidence="3">
    <original>ERKSPYVAICCIVMAFSILFIQ</original>
    <variation>SVYWQDTFTS</variation>
    <location>
        <begin position="51"/>
        <end position="72"/>
    </location>
</feature>
<feature type="sequence conflict" description="In Ref. 1; BAB28068." evidence="4" ref="1">
    <original>T</original>
    <variation>I</variation>
    <location>
        <position position="20"/>
    </location>
</feature>
<reference key="1">
    <citation type="journal article" date="2005" name="Science">
        <title>The transcriptional landscape of the mammalian genome.</title>
        <authorList>
            <person name="Carninci P."/>
            <person name="Kasukawa T."/>
            <person name="Katayama S."/>
            <person name="Gough J."/>
            <person name="Frith M.C."/>
            <person name="Maeda N."/>
            <person name="Oyama R."/>
            <person name="Ravasi T."/>
            <person name="Lenhard B."/>
            <person name="Wells C."/>
            <person name="Kodzius R."/>
            <person name="Shimokawa K."/>
            <person name="Bajic V.B."/>
            <person name="Brenner S.E."/>
            <person name="Batalov S."/>
            <person name="Forrest A.R."/>
            <person name="Zavolan M."/>
            <person name="Davis M.J."/>
            <person name="Wilming L.G."/>
            <person name="Aidinis V."/>
            <person name="Allen J.E."/>
            <person name="Ambesi-Impiombato A."/>
            <person name="Apweiler R."/>
            <person name="Aturaliya R.N."/>
            <person name="Bailey T.L."/>
            <person name="Bansal M."/>
            <person name="Baxter L."/>
            <person name="Beisel K.W."/>
            <person name="Bersano T."/>
            <person name="Bono H."/>
            <person name="Chalk A.M."/>
            <person name="Chiu K.P."/>
            <person name="Choudhary V."/>
            <person name="Christoffels A."/>
            <person name="Clutterbuck D.R."/>
            <person name="Crowe M.L."/>
            <person name="Dalla E."/>
            <person name="Dalrymple B.P."/>
            <person name="de Bono B."/>
            <person name="Della Gatta G."/>
            <person name="di Bernardo D."/>
            <person name="Down T."/>
            <person name="Engstrom P."/>
            <person name="Fagiolini M."/>
            <person name="Faulkner G."/>
            <person name="Fletcher C.F."/>
            <person name="Fukushima T."/>
            <person name="Furuno M."/>
            <person name="Futaki S."/>
            <person name="Gariboldi M."/>
            <person name="Georgii-Hemming P."/>
            <person name="Gingeras T.R."/>
            <person name="Gojobori T."/>
            <person name="Green R.E."/>
            <person name="Gustincich S."/>
            <person name="Harbers M."/>
            <person name="Hayashi Y."/>
            <person name="Hensch T.K."/>
            <person name="Hirokawa N."/>
            <person name="Hill D."/>
            <person name="Huminiecki L."/>
            <person name="Iacono M."/>
            <person name="Ikeo K."/>
            <person name="Iwama A."/>
            <person name="Ishikawa T."/>
            <person name="Jakt M."/>
            <person name="Kanapin A."/>
            <person name="Katoh M."/>
            <person name="Kawasawa Y."/>
            <person name="Kelso J."/>
            <person name="Kitamura H."/>
            <person name="Kitano H."/>
            <person name="Kollias G."/>
            <person name="Krishnan S.P."/>
            <person name="Kruger A."/>
            <person name="Kummerfeld S.K."/>
            <person name="Kurochkin I.V."/>
            <person name="Lareau L.F."/>
            <person name="Lazarevic D."/>
            <person name="Lipovich L."/>
            <person name="Liu J."/>
            <person name="Liuni S."/>
            <person name="McWilliam S."/>
            <person name="Madan Babu M."/>
            <person name="Madera M."/>
            <person name="Marchionni L."/>
            <person name="Matsuda H."/>
            <person name="Matsuzawa S."/>
            <person name="Miki H."/>
            <person name="Mignone F."/>
            <person name="Miyake S."/>
            <person name="Morris K."/>
            <person name="Mottagui-Tabar S."/>
            <person name="Mulder N."/>
            <person name="Nakano N."/>
            <person name="Nakauchi H."/>
            <person name="Ng P."/>
            <person name="Nilsson R."/>
            <person name="Nishiguchi S."/>
            <person name="Nishikawa S."/>
            <person name="Nori F."/>
            <person name="Ohara O."/>
            <person name="Okazaki Y."/>
            <person name="Orlando V."/>
            <person name="Pang K.C."/>
            <person name="Pavan W.J."/>
            <person name="Pavesi G."/>
            <person name="Pesole G."/>
            <person name="Petrovsky N."/>
            <person name="Piazza S."/>
            <person name="Reed J."/>
            <person name="Reid J.F."/>
            <person name="Ring B.Z."/>
            <person name="Ringwald M."/>
            <person name="Rost B."/>
            <person name="Ruan Y."/>
            <person name="Salzberg S.L."/>
            <person name="Sandelin A."/>
            <person name="Schneider C."/>
            <person name="Schoenbach C."/>
            <person name="Sekiguchi K."/>
            <person name="Semple C.A."/>
            <person name="Seno S."/>
            <person name="Sessa L."/>
            <person name="Sheng Y."/>
            <person name="Shibata Y."/>
            <person name="Shimada H."/>
            <person name="Shimada K."/>
            <person name="Silva D."/>
            <person name="Sinclair B."/>
            <person name="Sperling S."/>
            <person name="Stupka E."/>
            <person name="Sugiura K."/>
            <person name="Sultana R."/>
            <person name="Takenaka Y."/>
            <person name="Taki K."/>
            <person name="Tammoja K."/>
            <person name="Tan S.L."/>
            <person name="Tang S."/>
            <person name="Taylor M.S."/>
            <person name="Tegner J."/>
            <person name="Teichmann S.A."/>
            <person name="Ueda H.R."/>
            <person name="van Nimwegen E."/>
            <person name="Verardo R."/>
            <person name="Wei C.L."/>
            <person name="Yagi K."/>
            <person name="Yamanishi H."/>
            <person name="Zabarovsky E."/>
            <person name="Zhu S."/>
            <person name="Zimmer A."/>
            <person name="Hide W."/>
            <person name="Bult C."/>
            <person name="Grimmond S.M."/>
            <person name="Teasdale R.D."/>
            <person name="Liu E.T."/>
            <person name="Brusic V."/>
            <person name="Quackenbush J."/>
            <person name="Wahlestedt C."/>
            <person name="Mattick J.S."/>
            <person name="Hume D.A."/>
            <person name="Kai C."/>
            <person name="Sasaki D."/>
            <person name="Tomaru Y."/>
            <person name="Fukuda S."/>
            <person name="Kanamori-Katayama M."/>
            <person name="Suzuki M."/>
            <person name="Aoki J."/>
            <person name="Arakawa T."/>
            <person name="Iida J."/>
            <person name="Imamura K."/>
            <person name="Itoh M."/>
            <person name="Kato T."/>
            <person name="Kawaji H."/>
            <person name="Kawagashira N."/>
            <person name="Kawashima T."/>
            <person name="Kojima M."/>
            <person name="Kondo S."/>
            <person name="Konno H."/>
            <person name="Nakano K."/>
            <person name="Ninomiya N."/>
            <person name="Nishio T."/>
            <person name="Okada M."/>
            <person name="Plessy C."/>
            <person name="Shibata K."/>
            <person name="Shiraki T."/>
            <person name="Suzuki S."/>
            <person name="Tagami M."/>
            <person name="Waki K."/>
            <person name="Watahiki A."/>
            <person name="Okamura-Oho Y."/>
            <person name="Suzuki H."/>
            <person name="Kawai J."/>
            <person name="Hayashizaki Y."/>
        </authorList>
    </citation>
    <scope>NUCLEOTIDE SEQUENCE [LARGE SCALE MRNA] (ISOFORM 1)</scope>
    <source>
        <strain>C57BL/6J</strain>
        <strain>NOD</strain>
        <tissue>Head</tissue>
        <tissue>Kidney</tissue>
        <tissue>Liver</tissue>
        <tissue>Olfactory bulb</tissue>
        <tissue>Pancreas</tissue>
        <tissue>Testis</tissue>
        <tissue>Thymus</tissue>
    </source>
</reference>
<reference key="2">
    <citation type="journal article" date="2004" name="Genome Res.">
        <title>The status, quality, and expansion of the NIH full-length cDNA project: the Mammalian Gene Collection (MGC).</title>
        <authorList>
            <consortium name="The MGC Project Team"/>
        </authorList>
    </citation>
    <scope>NUCLEOTIDE SEQUENCE [LARGE SCALE MRNA] (ISOFORM 2)</scope>
    <source>
        <strain>FVB/N</strain>
        <tissue>Mammary tumor</tissue>
    </source>
</reference>
<reference key="3">
    <citation type="journal article" date="2010" name="Cell">
        <title>A tissue-specific atlas of mouse protein phosphorylation and expression.</title>
        <authorList>
            <person name="Huttlin E.L."/>
            <person name="Jedrychowski M.P."/>
            <person name="Elias J.E."/>
            <person name="Goswami T."/>
            <person name="Rad R."/>
            <person name="Beausoleil S.A."/>
            <person name="Villen J."/>
            <person name="Haas W."/>
            <person name="Sowa M.E."/>
            <person name="Gygi S.P."/>
        </authorList>
    </citation>
    <scope>IDENTIFICATION BY MASS SPECTROMETRY [LARGE SCALE ANALYSIS]</scope>
    <source>
        <tissue>Brain</tissue>
        <tissue>Heart</tissue>
        <tissue>Kidney</tissue>
        <tissue>Liver</tissue>
        <tissue>Lung</tissue>
        <tissue>Pancreas</tissue>
        <tissue>Testis</tissue>
    </source>
</reference>
<proteinExistence type="evidence at protein level"/>
<gene>
    <name type="primary">Tmem167a</name>
    <name type="synonym">Tmem167</name>
</gene>
<protein>
    <recommendedName>
        <fullName>Protein kish-A</fullName>
    </recommendedName>
    <alternativeName>
        <fullName>Transmembrane protein 167</fullName>
    </alternativeName>
    <alternativeName>
        <fullName>Transmembrane protein 167A</fullName>
    </alternativeName>
</protein>
<name>KISHA_MOUSE</name>
<comment type="function">
    <text evidence="1">Involved in the early part of the secretory pathway.</text>
</comment>
<comment type="subcellular location">
    <subcellularLocation>
        <location evidence="1">Golgi apparatus membrane</location>
        <topology evidence="1">Single-pass type I membrane protein</topology>
    </subcellularLocation>
</comment>
<comment type="alternative products">
    <event type="alternative splicing"/>
    <isoform>
        <id>Q9CR64-1</id>
        <name>1</name>
        <sequence type="displayed"/>
    </isoform>
    <isoform>
        <id>Q9CR64-2</id>
        <name>2</name>
        <sequence type="described" ref="VSP_020044"/>
    </isoform>
</comment>
<comment type="similarity">
    <text evidence="4">Belongs to the KISH family.</text>
</comment>
<evidence type="ECO:0000250" key="1"/>
<evidence type="ECO:0000255" key="2"/>
<evidence type="ECO:0000303" key="3">
    <source>
    </source>
</evidence>
<evidence type="ECO:0000305" key="4"/>